<protein>
    <recommendedName>
        <fullName evidence="1">Transcription antitermination protein NusB</fullName>
    </recommendedName>
    <alternativeName>
        <fullName evidence="1">Antitermination factor NusB</fullName>
    </alternativeName>
</protein>
<name>NUSB_DEIGD</name>
<gene>
    <name evidence="1" type="primary">nusB</name>
    <name type="ordered locus">Dgeo_0698</name>
</gene>
<evidence type="ECO:0000255" key="1">
    <source>
        <dbReference type="HAMAP-Rule" id="MF_00073"/>
    </source>
</evidence>
<feature type="chain" id="PRO_0000265514" description="Transcription antitermination protein NusB">
    <location>
        <begin position="1"/>
        <end position="169"/>
    </location>
</feature>
<proteinExistence type="inferred from homology"/>
<accession>Q1J0I4</accession>
<sequence>MTRRRERGQQPVGTRRAAREFAFRVLFEAERGKLPLETVFTRAEGDMREGDDTFAQLNAEALAFARQLVDGLGERRADVDAALRRTIRGWDFEQMAQTDLNVLRLATYEMLYTPEPHPPVIESAVRIARKFGGEDSGRFVNGVLGGLSRSLKTAPRLPQNTGAEDGPQE</sequence>
<organism>
    <name type="scientific">Deinococcus geothermalis (strain DSM 11300 / CIP 105573 / AG-3a)</name>
    <dbReference type="NCBI Taxonomy" id="319795"/>
    <lineage>
        <taxon>Bacteria</taxon>
        <taxon>Thermotogati</taxon>
        <taxon>Deinococcota</taxon>
        <taxon>Deinococci</taxon>
        <taxon>Deinococcales</taxon>
        <taxon>Deinococcaceae</taxon>
        <taxon>Deinococcus</taxon>
    </lineage>
</organism>
<keyword id="KW-0694">RNA-binding</keyword>
<keyword id="KW-0804">Transcription</keyword>
<keyword id="KW-0889">Transcription antitermination</keyword>
<keyword id="KW-0805">Transcription regulation</keyword>
<reference key="1">
    <citation type="submission" date="2006-04" db="EMBL/GenBank/DDBJ databases">
        <title>Complete sequence of chromosome of Deinococcus geothermalis DSM 11300.</title>
        <authorList>
            <person name="Copeland A."/>
            <person name="Lucas S."/>
            <person name="Lapidus A."/>
            <person name="Barry K."/>
            <person name="Detter J.C."/>
            <person name="Glavina del Rio T."/>
            <person name="Hammon N."/>
            <person name="Israni S."/>
            <person name="Dalin E."/>
            <person name="Tice H."/>
            <person name="Pitluck S."/>
            <person name="Brettin T."/>
            <person name="Bruce D."/>
            <person name="Han C."/>
            <person name="Tapia R."/>
            <person name="Saunders E."/>
            <person name="Gilna P."/>
            <person name="Schmutz J."/>
            <person name="Larimer F."/>
            <person name="Land M."/>
            <person name="Hauser L."/>
            <person name="Kyrpides N."/>
            <person name="Kim E."/>
            <person name="Daly M.J."/>
            <person name="Fredrickson J.K."/>
            <person name="Makarova K.S."/>
            <person name="Gaidamakova E.K."/>
            <person name="Zhai M."/>
            <person name="Richardson P."/>
        </authorList>
    </citation>
    <scope>NUCLEOTIDE SEQUENCE [LARGE SCALE GENOMIC DNA]</scope>
    <source>
        <strain>DSM 11300 / CIP 105573 / AG-3a</strain>
    </source>
</reference>
<dbReference type="EMBL" id="CP000359">
    <property type="protein sequence ID" value="ABF45000.1"/>
    <property type="molecule type" value="Genomic_DNA"/>
</dbReference>
<dbReference type="RefSeq" id="WP_011529841.1">
    <property type="nucleotide sequence ID" value="NC_008025.1"/>
</dbReference>
<dbReference type="SMR" id="Q1J0I4"/>
<dbReference type="STRING" id="319795.Dgeo_0698"/>
<dbReference type="KEGG" id="dge:Dgeo_0698"/>
<dbReference type="eggNOG" id="COG0781">
    <property type="taxonomic scope" value="Bacteria"/>
</dbReference>
<dbReference type="HOGENOM" id="CLU_087843_3_0_0"/>
<dbReference type="Proteomes" id="UP000002431">
    <property type="component" value="Chromosome"/>
</dbReference>
<dbReference type="GO" id="GO:0005829">
    <property type="term" value="C:cytosol"/>
    <property type="evidence" value="ECO:0007669"/>
    <property type="project" value="TreeGrafter"/>
</dbReference>
<dbReference type="GO" id="GO:0003723">
    <property type="term" value="F:RNA binding"/>
    <property type="evidence" value="ECO:0007669"/>
    <property type="project" value="UniProtKB-UniRule"/>
</dbReference>
<dbReference type="GO" id="GO:0006353">
    <property type="term" value="P:DNA-templated transcription termination"/>
    <property type="evidence" value="ECO:0007669"/>
    <property type="project" value="UniProtKB-UniRule"/>
</dbReference>
<dbReference type="GO" id="GO:0031564">
    <property type="term" value="P:transcription antitermination"/>
    <property type="evidence" value="ECO:0007669"/>
    <property type="project" value="UniProtKB-KW"/>
</dbReference>
<dbReference type="CDD" id="cd00619">
    <property type="entry name" value="Terminator_NusB"/>
    <property type="match status" value="1"/>
</dbReference>
<dbReference type="Gene3D" id="1.10.940.10">
    <property type="entry name" value="NusB-like"/>
    <property type="match status" value="1"/>
</dbReference>
<dbReference type="HAMAP" id="MF_00073">
    <property type="entry name" value="NusB"/>
    <property type="match status" value="1"/>
</dbReference>
<dbReference type="InterPro" id="IPR035926">
    <property type="entry name" value="NusB-like_sf"/>
</dbReference>
<dbReference type="InterPro" id="IPR011605">
    <property type="entry name" value="NusB_fam"/>
</dbReference>
<dbReference type="InterPro" id="IPR006027">
    <property type="entry name" value="NusB_RsmB_TIM44"/>
</dbReference>
<dbReference type="NCBIfam" id="TIGR01951">
    <property type="entry name" value="nusB"/>
    <property type="match status" value="1"/>
</dbReference>
<dbReference type="PANTHER" id="PTHR11078:SF3">
    <property type="entry name" value="ANTITERMINATION NUSB DOMAIN-CONTAINING PROTEIN"/>
    <property type="match status" value="1"/>
</dbReference>
<dbReference type="PANTHER" id="PTHR11078">
    <property type="entry name" value="N UTILIZATION SUBSTANCE PROTEIN B-RELATED"/>
    <property type="match status" value="1"/>
</dbReference>
<dbReference type="Pfam" id="PF01029">
    <property type="entry name" value="NusB"/>
    <property type="match status" value="1"/>
</dbReference>
<dbReference type="SUPFAM" id="SSF48013">
    <property type="entry name" value="NusB-like"/>
    <property type="match status" value="1"/>
</dbReference>
<comment type="function">
    <text evidence="1">Involved in transcription antitermination. Required for transcription of ribosomal RNA (rRNA) genes. Binds specifically to the boxA antiterminator sequence of the ribosomal RNA (rrn) operons.</text>
</comment>
<comment type="similarity">
    <text evidence="1">Belongs to the NusB family.</text>
</comment>